<sequence>MPSVRIKEREPFDVALRRFKRSCEKAGIVSELRRREYFEKPTWARKRKKTAAVKRAHKSNIIVKR</sequence>
<feature type="chain" id="PRO_0000266676" description="Small ribosomal subunit protein bS21C">
    <location>
        <begin position="1"/>
        <end position="65"/>
    </location>
</feature>
<dbReference type="EMBL" id="AJ749949">
    <property type="protein sequence ID" value="CAG45671.1"/>
    <property type="molecule type" value="Genomic_DNA"/>
</dbReference>
<dbReference type="RefSeq" id="YP_170021.1">
    <property type="nucleotide sequence ID" value="NC_006570.2"/>
</dbReference>
<dbReference type="SMR" id="Q5NG21"/>
<dbReference type="STRING" id="177416.FTT_1038c"/>
<dbReference type="DNASU" id="3191008"/>
<dbReference type="EnsemblBacteria" id="CAG45671">
    <property type="protein sequence ID" value="CAG45671"/>
    <property type="gene ID" value="FTT_1038c"/>
</dbReference>
<dbReference type="KEGG" id="ftu:FTT_1038c"/>
<dbReference type="eggNOG" id="COG0828">
    <property type="taxonomic scope" value="Bacteria"/>
</dbReference>
<dbReference type="OrthoDB" id="9799244at2"/>
<dbReference type="Proteomes" id="UP000001174">
    <property type="component" value="Chromosome"/>
</dbReference>
<dbReference type="GO" id="GO:1990904">
    <property type="term" value="C:ribonucleoprotein complex"/>
    <property type="evidence" value="ECO:0007669"/>
    <property type="project" value="UniProtKB-KW"/>
</dbReference>
<dbReference type="GO" id="GO:0005840">
    <property type="term" value="C:ribosome"/>
    <property type="evidence" value="ECO:0007669"/>
    <property type="project" value="UniProtKB-KW"/>
</dbReference>
<dbReference type="GO" id="GO:0003735">
    <property type="term" value="F:structural constituent of ribosome"/>
    <property type="evidence" value="ECO:0007669"/>
    <property type="project" value="InterPro"/>
</dbReference>
<dbReference type="GO" id="GO:0006412">
    <property type="term" value="P:translation"/>
    <property type="evidence" value="ECO:0007669"/>
    <property type="project" value="UniProtKB-UniRule"/>
</dbReference>
<dbReference type="Gene3D" id="1.20.5.1150">
    <property type="entry name" value="Ribosomal protein S8"/>
    <property type="match status" value="1"/>
</dbReference>
<dbReference type="HAMAP" id="MF_00358">
    <property type="entry name" value="Ribosomal_bS21"/>
    <property type="match status" value="1"/>
</dbReference>
<dbReference type="InterPro" id="IPR001911">
    <property type="entry name" value="Ribosomal_bS21"/>
</dbReference>
<dbReference type="InterPro" id="IPR018278">
    <property type="entry name" value="Ribosomal_bS21_CS"/>
</dbReference>
<dbReference type="InterPro" id="IPR038380">
    <property type="entry name" value="Ribosomal_bS21_sf"/>
</dbReference>
<dbReference type="NCBIfam" id="TIGR00030">
    <property type="entry name" value="S21p"/>
    <property type="match status" value="1"/>
</dbReference>
<dbReference type="PANTHER" id="PTHR21109">
    <property type="entry name" value="MITOCHONDRIAL 28S RIBOSOMAL PROTEIN S21"/>
    <property type="match status" value="1"/>
</dbReference>
<dbReference type="PANTHER" id="PTHR21109:SF22">
    <property type="entry name" value="SMALL RIBOSOMAL SUBUNIT PROTEIN BS21"/>
    <property type="match status" value="1"/>
</dbReference>
<dbReference type="Pfam" id="PF01165">
    <property type="entry name" value="Ribosomal_S21"/>
    <property type="match status" value="1"/>
</dbReference>
<dbReference type="PRINTS" id="PR00976">
    <property type="entry name" value="RIBOSOMALS21"/>
</dbReference>
<dbReference type="PROSITE" id="PS01181">
    <property type="entry name" value="RIBOSOMAL_S21"/>
    <property type="match status" value="1"/>
</dbReference>
<keyword id="KW-1185">Reference proteome</keyword>
<keyword id="KW-0687">Ribonucleoprotein</keyword>
<keyword id="KW-0689">Ribosomal protein</keyword>
<accession>Q5NG21</accession>
<protein>
    <recommendedName>
        <fullName evidence="1">Small ribosomal subunit protein bS21C</fullName>
    </recommendedName>
    <alternativeName>
        <fullName evidence="2">30S ribosomal protein S21 3</fullName>
    </alternativeName>
</protein>
<gene>
    <name evidence="1" type="primary">rpsU3</name>
    <name type="ordered locus">FTT_1038c</name>
</gene>
<comment type="similarity">
    <text evidence="1">Belongs to the bacterial ribosomal protein bS21 family.</text>
</comment>
<organism>
    <name type="scientific">Francisella tularensis subsp. tularensis (strain SCHU S4 / Schu 4)</name>
    <dbReference type="NCBI Taxonomy" id="177416"/>
    <lineage>
        <taxon>Bacteria</taxon>
        <taxon>Pseudomonadati</taxon>
        <taxon>Pseudomonadota</taxon>
        <taxon>Gammaproteobacteria</taxon>
        <taxon>Thiotrichales</taxon>
        <taxon>Francisellaceae</taxon>
        <taxon>Francisella</taxon>
    </lineage>
</organism>
<proteinExistence type="inferred from homology"/>
<name>RS213_FRATT</name>
<evidence type="ECO:0000255" key="1">
    <source>
        <dbReference type="HAMAP-Rule" id="MF_00358"/>
    </source>
</evidence>
<evidence type="ECO:0000305" key="2"/>
<reference key="1">
    <citation type="journal article" date="2005" name="Nat. Genet.">
        <title>The complete genome sequence of Francisella tularensis, the causative agent of tularemia.</title>
        <authorList>
            <person name="Larsson P."/>
            <person name="Oyston P.C.F."/>
            <person name="Chain P."/>
            <person name="Chu M.C."/>
            <person name="Duffield M."/>
            <person name="Fuxelius H.-H."/>
            <person name="Garcia E."/>
            <person name="Haelltorp G."/>
            <person name="Johansson D."/>
            <person name="Isherwood K.E."/>
            <person name="Karp P.D."/>
            <person name="Larsson E."/>
            <person name="Liu Y."/>
            <person name="Michell S."/>
            <person name="Prior J."/>
            <person name="Prior R."/>
            <person name="Malfatti S."/>
            <person name="Sjoestedt A."/>
            <person name="Svensson K."/>
            <person name="Thompson N."/>
            <person name="Vergez L."/>
            <person name="Wagg J.K."/>
            <person name="Wren B.W."/>
            <person name="Lindler L.E."/>
            <person name="Andersson S.G.E."/>
            <person name="Forsman M."/>
            <person name="Titball R.W."/>
        </authorList>
    </citation>
    <scope>NUCLEOTIDE SEQUENCE [LARGE SCALE GENOMIC DNA]</scope>
    <source>
        <strain>SCHU S4 / Schu 4</strain>
    </source>
</reference>